<accession>B9JDV1</accession>
<keyword id="KW-0687">Ribonucleoprotein</keyword>
<keyword id="KW-0689">Ribosomal protein</keyword>
<keyword id="KW-0694">RNA-binding</keyword>
<keyword id="KW-0699">rRNA-binding</keyword>
<dbReference type="EMBL" id="CP000628">
    <property type="protein sequence ID" value="ACM26302.1"/>
    <property type="molecule type" value="Genomic_DNA"/>
</dbReference>
<dbReference type="RefSeq" id="WP_003547577.1">
    <property type="nucleotide sequence ID" value="NC_011985.1"/>
</dbReference>
<dbReference type="SMR" id="B9JDV1"/>
<dbReference type="STRING" id="311403.Arad_2004"/>
<dbReference type="GeneID" id="91148151"/>
<dbReference type="KEGG" id="ara:Arad_2004"/>
<dbReference type="eggNOG" id="COG0100">
    <property type="taxonomic scope" value="Bacteria"/>
</dbReference>
<dbReference type="HOGENOM" id="CLU_072439_5_0_5"/>
<dbReference type="Proteomes" id="UP000001600">
    <property type="component" value="Chromosome 1"/>
</dbReference>
<dbReference type="GO" id="GO:1990904">
    <property type="term" value="C:ribonucleoprotein complex"/>
    <property type="evidence" value="ECO:0007669"/>
    <property type="project" value="UniProtKB-KW"/>
</dbReference>
<dbReference type="GO" id="GO:0005840">
    <property type="term" value="C:ribosome"/>
    <property type="evidence" value="ECO:0007669"/>
    <property type="project" value="UniProtKB-KW"/>
</dbReference>
<dbReference type="GO" id="GO:0019843">
    <property type="term" value="F:rRNA binding"/>
    <property type="evidence" value="ECO:0007669"/>
    <property type="project" value="UniProtKB-UniRule"/>
</dbReference>
<dbReference type="GO" id="GO:0003735">
    <property type="term" value="F:structural constituent of ribosome"/>
    <property type="evidence" value="ECO:0007669"/>
    <property type="project" value="InterPro"/>
</dbReference>
<dbReference type="GO" id="GO:0006412">
    <property type="term" value="P:translation"/>
    <property type="evidence" value="ECO:0007669"/>
    <property type="project" value="UniProtKB-UniRule"/>
</dbReference>
<dbReference type="FunFam" id="3.30.420.80:FF:000001">
    <property type="entry name" value="30S ribosomal protein S11"/>
    <property type="match status" value="1"/>
</dbReference>
<dbReference type="Gene3D" id="3.30.420.80">
    <property type="entry name" value="Ribosomal protein S11"/>
    <property type="match status" value="1"/>
</dbReference>
<dbReference type="HAMAP" id="MF_01310">
    <property type="entry name" value="Ribosomal_uS11"/>
    <property type="match status" value="1"/>
</dbReference>
<dbReference type="InterPro" id="IPR001971">
    <property type="entry name" value="Ribosomal_uS11"/>
</dbReference>
<dbReference type="InterPro" id="IPR019981">
    <property type="entry name" value="Ribosomal_uS11_bac-type"/>
</dbReference>
<dbReference type="InterPro" id="IPR018102">
    <property type="entry name" value="Ribosomal_uS11_CS"/>
</dbReference>
<dbReference type="InterPro" id="IPR036967">
    <property type="entry name" value="Ribosomal_uS11_sf"/>
</dbReference>
<dbReference type="NCBIfam" id="NF003698">
    <property type="entry name" value="PRK05309.1"/>
    <property type="match status" value="1"/>
</dbReference>
<dbReference type="NCBIfam" id="TIGR03632">
    <property type="entry name" value="uS11_bact"/>
    <property type="match status" value="1"/>
</dbReference>
<dbReference type="PANTHER" id="PTHR11759">
    <property type="entry name" value="40S RIBOSOMAL PROTEIN S14/30S RIBOSOMAL PROTEIN S11"/>
    <property type="match status" value="1"/>
</dbReference>
<dbReference type="Pfam" id="PF00411">
    <property type="entry name" value="Ribosomal_S11"/>
    <property type="match status" value="1"/>
</dbReference>
<dbReference type="PIRSF" id="PIRSF002131">
    <property type="entry name" value="Ribosomal_S11"/>
    <property type="match status" value="1"/>
</dbReference>
<dbReference type="SUPFAM" id="SSF53137">
    <property type="entry name" value="Translational machinery components"/>
    <property type="match status" value="1"/>
</dbReference>
<dbReference type="PROSITE" id="PS00054">
    <property type="entry name" value="RIBOSOMAL_S11"/>
    <property type="match status" value="1"/>
</dbReference>
<reference key="1">
    <citation type="journal article" date="2009" name="J. Bacteriol.">
        <title>Genome sequences of three Agrobacterium biovars help elucidate the evolution of multichromosome genomes in bacteria.</title>
        <authorList>
            <person name="Slater S.C."/>
            <person name="Goldman B.S."/>
            <person name="Goodner B."/>
            <person name="Setubal J.C."/>
            <person name="Farrand S.K."/>
            <person name="Nester E.W."/>
            <person name="Burr T.J."/>
            <person name="Banta L."/>
            <person name="Dickerman A.W."/>
            <person name="Paulsen I."/>
            <person name="Otten L."/>
            <person name="Suen G."/>
            <person name="Welch R."/>
            <person name="Almeida N.F."/>
            <person name="Arnold F."/>
            <person name="Burton O.T."/>
            <person name="Du Z."/>
            <person name="Ewing A."/>
            <person name="Godsy E."/>
            <person name="Heisel S."/>
            <person name="Houmiel K.L."/>
            <person name="Jhaveri J."/>
            <person name="Lu J."/>
            <person name="Miller N.M."/>
            <person name="Norton S."/>
            <person name="Chen Q."/>
            <person name="Phoolcharoen W."/>
            <person name="Ohlin V."/>
            <person name="Ondrusek D."/>
            <person name="Pride N."/>
            <person name="Stricklin S.L."/>
            <person name="Sun J."/>
            <person name="Wheeler C."/>
            <person name="Wilson L."/>
            <person name="Zhu H."/>
            <person name="Wood D.W."/>
        </authorList>
    </citation>
    <scope>NUCLEOTIDE SEQUENCE [LARGE SCALE GENOMIC DNA]</scope>
    <source>
        <strain>K84 / ATCC BAA-868</strain>
    </source>
</reference>
<feature type="chain" id="PRO_1000165523" description="Small ribosomal subunit protein uS11">
    <location>
        <begin position="1"/>
        <end position="129"/>
    </location>
</feature>
<organism>
    <name type="scientific">Rhizobium rhizogenes (strain K84 / ATCC BAA-868)</name>
    <name type="common">Agrobacterium radiobacter</name>
    <dbReference type="NCBI Taxonomy" id="311403"/>
    <lineage>
        <taxon>Bacteria</taxon>
        <taxon>Pseudomonadati</taxon>
        <taxon>Pseudomonadota</taxon>
        <taxon>Alphaproteobacteria</taxon>
        <taxon>Hyphomicrobiales</taxon>
        <taxon>Rhizobiaceae</taxon>
        <taxon>Rhizobium/Agrobacterium group</taxon>
        <taxon>Rhizobium</taxon>
    </lineage>
</organism>
<name>RS11_RHIR8</name>
<proteinExistence type="inferred from homology"/>
<protein>
    <recommendedName>
        <fullName evidence="1">Small ribosomal subunit protein uS11</fullName>
    </recommendedName>
    <alternativeName>
        <fullName evidence="2">30S ribosomal protein S11</fullName>
    </alternativeName>
</protein>
<sequence length="129" mass="13893">MAKEAVRVRRRERKNISSGVAHVNSTFNNTMITITDAQGNAIAWSSAGAKGFKGSRKSTPFAAQIAAEDCAKKAQEHGMKSLEVEVCGPGSGRESALRALQAAGFMITSIRDVTPIPHNGCRPRKKRRV</sequence>
<evidence type="ECO:0000255" key="1">
    <source>
        <dbReference type="HAMAP-Rule" id="MF_01310"/>
    </source>
</evidence>
<evidence type="ECO:0000305" key="2"/>
<gene>
    <name evidence="1" type="primary">rpsK</name>
    <name type="ordered locus">Arad_2004</name>
</gene>
<comment type="function">
    <text evidence="1">Located on the platform of the 30S subunit, it bridges several disparate RNA helices of the 16S rRNA. Forms part of the Shine-Dalgarno cleft in the 70S ribosome.</text>
</comment>
<comment type="subunit">
    <text evidence="1">Part of the 30S ribosomal subunit. Interacts with proteins S7 and S18. Binds to IF-3.</text>
</comment>
<comment type="similarity">
    <text evidence="1">Belongs to the universal ribosomal protein uS11 family.</text>
</comment>